<dbReference type="EMBL" id="CP001130">
    <property type="protein sequence ID" value="ACG56984.1"/>
    <property type="molecule type" value="Genomic_DNA"/>
</dbReference>
<dbReference type="RefSeq" id="WP_012513340.1">
    <property type="nucleotide sequence ID" value="NC_011126.1"/>
</dbReference>
<dbReference type="SMR" id="B4U773"/>
<dbReference type="STRING" id="380749.HY04AAS1_0294"/>
<dbReference type="KEGG" id="hya:HY04AAS1_0294"/>
<dbReference type="eggNOG" id="COG0203">
    <property type="taxonomic scope" value="Bacteria"/>
</dbReference>
<dbReference type="HOGENOM" id="CLU_074407_2_2_0"/>
<dbReference type="OrthoDB" id="9809073at2"/>
<dbReference type="GO" id="GO:0022625">
    <property type="term" value="C:cytosolic large ribosomal subunit"/>
    <property type="evidence" value="ECO:0007669"/>
    <property type="project" value="TreeGrafter"/>
</dbReference>
<dbReference type="GO" id="GO:0003735">
    <property type="term" value="F:structural constituent of ribosome"/>
    <property type="evidence" value="ECO:0007669"/>
    <property type="project" value="InterPro"/>
</dbReference>
<dbReference type="GO" id="GO:0006412">
    <property type="term" value="P:translation"/>
    <property type="evidence" value="ECO:0007669"/>
    <property type="project" value="UniProtKB-UniRule"/>
</dbReference>
<dbReference type="Gene3D" id="3.90.1030.10">
    <property type="entry name" value="Ribosomal protein L17"/>
    <property type="match status" value="1"/>
</dbReference>
<dbReference type="HAMAP" id="MF_01368">
    <property type="entry name" value="Ribosomal_bL17"/>
    <property type="match status" value="1"/>
</dbReference>
<dbReference type="InterPro" id="IPR000456">
    <property type="entry name" value="Ribosomal_bL17"/>
</dbReference>
<dbReference type="InterPro" id="IPR036373">
    <property type="entry name" value="Ribosomal_bL17_sf"/>
</dbReference>
<dbReference type="NCBIfam" id="TIGR00059">
    <property type="entry name" value="L17"/>
    <property type="match status" value="1"/>
</dbReference>
<dbReference type="PANTHER" id="PTHR14413:SF16">
    <property type="entry name" value="LARGE RIBOSOMAL SUBUNIT PROTEIN BL17M"/>
    <property type="match status" value="1"/>
</dbReference>
<dbReference type="PANTHER" id="PTHR14413">
    <property type="entry name" value="RIBOSOMAL PROTEIN L17"/>
    <property type="match status" value="1"/>
</dbReference>
<dbReference type="Pfam" id="PF01196">
    <property type="entry name" value="Ribosomal_L17"/>
    <property type="match status" value="1"/>
</dbReference>
<dbReference type="SUPFAM" id="SSF64263">
    <property type="entry name" value="Prokaryotic ribosomal protein L17"/>
    <property type="match status" value="1"/>
</dbReference>
<organism>
    <name type="scientific">Hydrogenobaculum sp. (strain Y04AAS1)</name>
    <dbReference type="NCBI Taxonomy" id="380749"/>
    <lineage>
        <taxon>Bacteria</taxon>
        <taxon>Pseudomonadati</taxon>
        <taxon>Aquificota</taxon>
        <taxon>Aquificia</taxon>
        <taxon>Aquificales</taxon>
        <taxon>Aquificaceae</taxon>
        <taxon>Hydrogenobaculum</taxon>
    </lineage>
</organism>
<protein>
    <recommendedName>
        <fullName evidence="1">Large ribosomal subunit protein bL17</fullName>
    </recommendedName>
    <alternativeName>
        <fullName evidence="2">50S ribosomal protein L17</fullName>
    </alternativeName>
</protein>
<reference key="1">
    <citation type="journal article" date="2009" name="J. Bacteriol.">
        <title>Complete and draft genome sequences of six members of the Aquificales.</title>
        <authorList>
            <person name="Reysenbach A.-L."/>
            <person name="Hamamura N."/>
            <person name="Podar M."/>
            <person name="Griffiths E."/>
            <person name="Ferreira S."/>
            <person name="Hochstein R."/>
            <person name="Heidelberg J."/>
            <person name="Johnson J."/>
            <person name="Mead D."/>
            <person name="Pohorille A."/>
            <person name="Sarmiento M."/>
            <person name="Schweighofer K."/>
            <person name="Seshadri R."/>
            <person name="Voytek M.A."/>
        </authorList>
    </citation>
    <scope>NUCLEOTIDE SEQUENCE [LARGE SCALE GENOMIC DNA]</scope>
    <source>
        <strain>Y04AAS1</strain>
    </source>
</reference>
<proteinExistence type="inferred from homology"/>
<comment type="subunit">
    <text evidence="1">Part of the 50S ribosomal subunit. Contacts protein L32.</text>
</comment>
<comment type="similarity">
    <text evidence="1">Belongs to the bacterial ribosomal protein bL17 family.</text>
</comment>
<sequence>MRHRVKKKHFSRTAEQRVALMRSLARSLILFEKIESSEAKLKALRPFVERLITLAKKGDLASRRRALSLLPDKEAIRKLFTELAPRFEGRNGGYTRIVKLPNRKPGDSTELAIIEFVE</sequence>
<accession>B4U773</accession>
<gene>
    <name evidence="1" type="primary">rplQ</name>
    <name type="ordered locus">HY04AAS1_0294</name>
</gene>
<evidence type="ECO:0000255" key="1">
    <source>
        <dbReference type="HAMAP-Rule" id="MF_01368"/>
    </source>
</evidence>
<evidence type="ECO:0000305" key="2"/>
<name>RL17_HYDS0</name>
<keyword id="KW-0687">Ribonucleoprotein</keyword>
<keyword id="KW-0689">Ribosomal protein</keyword>
<feature type="chain" id="PRO_1000144436" description="Large ribosomal subunit protein bL17">
    <location>
        <begin position="1"/>
        <end position="118"/>
    </location>
</feature>